<gene>
    <name type="ordered locus">MTH_434</name>
</gene>
<sequence length="190" mass="21804">MNMVVIGVTGMPGAGKGVVSRIAESMGFRVIRMGDVIRDEARKRGEDPGVTAVRLREEYGKYVVAEKCVERIQESESEMFLIEGIRSPHEVEIFRKRFPGFRVISVFSTRKTRFRRLRKRQREDDSQRYAEFVERDERELGFGIGDVIATSDYMIVNEGPIWKIKKQAKQILRKLAEKGEESSRGGQEDG</sequence>
<dbReference type="EMBL" id="AE000666">
    <property type="protein sequence ID" value="AAB84940.1"/>
    <property type="molecule type" value="Genomic_DNA"/>
</dbReference>
<dbReference type="PIR" id="F69156">
    <property type="entry name" value="F69156"/>
</dbReference>
<dbReference type="SMR" id="O26534"/>
<dbReference type="STRING" id="187420.MTH_434"/>
<dbReference type="PaxDb" id="187420-MTH_434"/>
<dbReference type="EnsemblBacteria" id="AAB84940">
    <property type="protein sequence ID" value="AAB84940"/>
    <property type="gene ID" value="MTH_434"/>
</dbReference>
<dbReference type="KEGG" id="mth:MTH_434"/>
<dbReference type="PATRIC" id="fig|187420.15.peg.404"/>
<dbReference type="HOGENOM" id="CLU_096329_1_0_2"/>
<dbReference type="InParanoid" id="O26534"/>
<dbReference type="Proteomes" id="UP000005223">
    <property type="component" value="Chromosome"/>
</dbReference>
<dbReference type="GO" id="GO:0005524">
    <property type="term" value="F:ATP binding"/>
    <property type="evidence" value="ECO:0007669"/>
    <property type="project" value="UniProtKB-UniRule"/>
</dbReference>
<dbReference type="Gene3D" id="3.40.50.300">
    <property type="entry name" value="P-loop containing nucleotide triphosphate hydrolases"/>
    <property type="match status" value="1"/>
</dbReference>
<dbReference type="HAMAP" id="MF_01111">
    <property type="entry name" value="UPF0200"/>
    <property type="match status" value="1"/>
</dbReference>
<dbReference type="InterPro" id="IPR022970">
    <property type="entry name" value="NTP_hydrolase-rel"/>
</dbReference>
<dbReference type="InterPro" id="IPR027417">
    <property type="entry name" value="P-loop_NTPase"/>
</dbReference>
<dbReference type="PANTHER" id="PTHR41930:SF1">
    <property type="entry name" value="DEPHOSPHO-COA KINASE"/>
    <property type="match status" value="1"/>
</dbReference>
<dbReference type="PANTHER" id="PTHR41930">
    <property type="entry name" value="UPF0200 PROTEIN MJ1399"/>
    <property type="match status" value="1"/>
</dbReference>
<dbReference type="Pfam" id="PF13207">
    <property type="entry name" value="AAA_17"/>
    <property type="match status" value="1"/>
</dbReference>
<dbReference type="SUPFAM" id="SSF52540">
    <property type="entry name" value="P-loop containing nucleoside triphosphate hydrolases"/>
    <property type="match status" value="1"/>
</dbReference>
<comment type="similarity">
    <text evidence="1">Belongs to the UPF0200 family.</text>
</comment>
<proteinExistence type="inferred from homology"/>
<protein>
    <recommendedName>
        <fullName evidence="1">UPF0200 protein MTH_434</fullName>
    </recommendedName>
</protein>
<organism>
    <name type="scientific">Methanothermobacter thermautotrophicus (strain ATCC 29096 / DSM 1053 / JCM 10044 / NBRC 100330 / Delta H)</name>
    <name type="common">Methanobacterium thermoautotrophicum</name>
    <dbReference type="NCBI Taxonomy" id="187420"/>
    <lineage>
        <taxon>Archaea</taxon>
        <taxon>Methanobacteriati</taxon>
        <taxon>Methanobacteriota</taxon>
        <taxon>Methanomada group</taxon>
        <taxon>Methanobacteria</taxon>
        <taxon>Methanobacteriales</taxon>
        <taxon>Methanobacteriaceae</taxon>
        <taxon>Methanothermobacter</taxon>
    </lineage>
</organism>
<name>Y434_METTH</name>
<keyword id="KW-0067">ATP-binding</keyword>
<keyword id="KW-0547">Nucleotide-binding</keyword>
<keyword id="KW-1185">Reference proteome</keyword>
<feature type="chain" id="PRO_0000094528" description="UPF0200 protein MTH_434">
    <location>
        <begin position="1"/>
        <end position="190"/>
    </location>
</feature>
<feature type="binding site" evidence="1">
    <location>
        <begin position="10"/>
        <end position="17"/>
    </location>
    <ligand>
        <name>ATP</name>
        <dbReference type="ChEBI" id="CHEBI:30616"/>
    </ligand>
</feature>
<reference key="1">
    <citation type="journal article" date="1997" name="J. Bacteriol.">
        <title>Complete genome sequence of Methanobacterium thermoautotrophicum deltaH: functional analysis and comparative genomics.</title>
        <authorList>
            <person name="Smith D.R."/>
            <person name="Doucette-Stamm L.A."/>
            <person name="Deloughery C."/>
            <person name="Lee H.-M."/>
            <person name="Dubois J."/>
            <person name="Aldredge T."/>
            <person name="Bashirzadeh R."/>
            <person name="Blakely D."/>
            <person name="Cook R."/>
            <person name="Gilbert K."/>
            <person name="Harrison D."/>
            <person name="Hoang L."/>
            <person name="Keagle P."/>
            <person name="Lumm W."/>
            <person name="Pothier B."/>
            <person name="Qiu D."/>
            <person name="Spadafora R."/>
            <person name="Vicare R."/>
            <person name="Wang Y."/>
            <person name="Wierzbowski J."/>
            <person name="Gibson R."/>
            <person name="Jiwani N."/>
            <person name="Caruso A."/>
            <person name="Bush D."/>
            <person name="Safer H."/>
            <person name="Patwell D."/>
            <person name="Prabhakar S."/>
            <person name="McDougall S."/>
            <person name="Shimer G."/>
            <person name="Goyal A."/>
            <person name="Pietrovski S."/>
            <person name="Church G.M."/>
            <person name="Daniels C.J."/>
            <person name="Mao J.-I."/>
            <person name="Rice P."/>
            <person name="Noelling J."/>
            <person name="Reeve J.N."/>
        </authorList>
    </citation>
    <scope>NUCLEOTIDE SEQUENCE [LARGE SCALE GENOMIC DNA]</scope>
    <source>
        <strain>ATCC 29096 / DSM 1053 / JCM 10044 / NBRC 100330 / Delta H</strain>
    </source>
</reference>
<accession>O26534</accession>
<evidence type="ECO:0000255" key="1">
    <source>
        <dbReference type="HAMAP-Rule" id="MF_01111"/>
    </source>
</evidence>